<keyword id="KW-0010">Activator</keyword>
<keyword id="KW-0963">Cytoplasm</keyword>
<keyword id="KW-0238">DNA-binding</keyword>
<keyword id="KW-0464">Manganese</keyword>
<keyword id="KW-0479">Metal-binding</keyword>
<keyword id="KW-0678">Repressor</keyword>
<keyword id="KW-0804">Transcription</keyword>
<keyword id="KW-0805">Transcription regulation</keyword>
<gene>
    <name evidence="1" type="primary">mntR</name>
    <name type="ordered locus">BcerKBAB4_4057</name>
</gene>
<accession>A9VGY7</accession>
<organism>
    <name type="scientific">Bacillus mycoides (strain KBAB4)</name>
    <name type="common">Bacillus weihenstephanensis</name>
    <dbReference type="NCBI Taxonomy" id="315730"/>
    <lineage>
        <taxon>Bacteria</taxon>
        <taxon>Bacillati</taxon>
        <taxon>Bacillota</taxon>
        <taxon>Bacilli</taxon>
        <taxon>Bacillales</taxon>
        <taxon>Bacillaceae</taxon>
        <taxon>Bacillus</taxon>
        <taxon>Bacillus cereus group</taxon>
    </lineage>
</organism>
<proteinExistence type="inferred from homology"/>
<dbReference type="EMBL" id="CP000903">
    <property type="protein sequence ID" value="ABY45219.1"/>
    <property type="molecule type" value="Genomic_DNA"/>
</dbReference>
<dbReference type="RefSeq" id="WP_002143106.1">
    <property type="nucleotide sequence ID" value="NC_010184.1"/>
</dbReference>
<dbReference type="SMR" id="A9VGY7"/>
<dbReference type="GeneID" id="66266218"/>
<dbReference type="KEGG" id="bwe:BcerKBAB4_4057"/>
<dbReference type="eggNOG" id="COG1321">
    <property type="taxonomic scope" value="Bacteria"/>
</dbReference>
<dbReference type="HOGENOM" id="CLU_069532_3_0_9"/>
<dbReference type="Proteomes" id="UP000002154">
    <property type="component" value="Chromosome"/>
</dbReference>
<dbReference type="GO" id="GO:0005737">
    <property type="term" value="C:cytoplasm"/>
    <property type="evidence" value="ECO:0007669"/>
    <property type="project" value="UniProtKB-SubCell"/>
</dbReference>
<dbReference type="GO" id="GO:0003677">
    <property type="term" value="F:DNA binding"/>
    <property type="evidence" value="ECO:0007669"/>
    <property type="project" value="UniProtKB-KW"/>
</dbReference>
<dbReference type="GO" id="GO:0003700">
    <property type="term" value="F:DNA-binding transcription factor activity"/>
    <property type="evidence" value="ECO:0007669"/>
    <property type="project" value="UniProtKB-UniRule"/>
</dbReference>
<dbReference type="GO" id="GO:0030145">
    <property type="term" value="F:manganese ion binding"/>
    <property type="evidence" value="ECO:0007669"/>
    <property type="project" value="UniProtKB-UniRule"/>
</dbReference>
<dbReference type="GO" id="GO:0046983">
    <property type="term" value="F:protein dimerization activity"/>
    <property type="evidence" value="ECO:0007669"/>
    <property type="project" value="InterPro"/>
</dbReference>
<dbReference type="GO" id="GO:0030026">
    <property type="term" value="P:intracellular manganese ion homeostasis"/>
    <property type="evidence" value="ECO:0007669"/>
    <property type="project" value="UniProtKB-UniRule"/>
</dbReference>
<dbReference type="FunFam" id="1.10.10.10:FF:000189">
    <property type="entry name" value="HTH-type transcriptional regulator MntR"/>
    <property type="match status" value="1"/>
</dbReference>
<dbReference type="FunFam" id="1.10.60.10:FF:000003">
    <property type="entry name" value="HTH-type transcriptional regulator MntR"/>
    <property type="match status" value="1"/>
</dbReference>
<dbReference type="Gene3D" id="1.10.60.10">
    <property type="entry name" value="Iron dependent repressor, metal binding and dimerisation domain"/>
    <property type="match status" value="1"/>
</dbReference>
<dbReference type="Gene3D" id="1.10.10.10">
    <property type="entry name" value="Winged helix-like DNA-binding domain superfamily/Winged helix DNA-binding domain"/>
    <property type="match status" value="1"/>
</dbReference>
<dbReference type="HAMAP" id="MF_00732">
    <property type="entry name" value="HTH_MntR"/>
    <property type="match status" value="1"/>
</dbReference>
<dbReference type="InterPro" id="IPR050536">
    <property type="entry name" value="DtxR_MntR_Metal-Reg"/>
</dbReference>
<dbReference type="InterPro" id="IPR001367">
    <property type="entry name" value="Fe_dep_repressor"/>
</dbReference>
<dbReference type="InterPro" id="IPR036421">
    <property type="entry name" value="Fe_dep_repressor_sf"/>
</dbReference>
<dbReference type="InterPro" id="IPR022687">
    <property type="entry name" value="HTH_DTXR"/>
</dbReference>
<dbReference type="InterPro" id="IPR022897">
    <property type="entry name" value="HTH_tscrpt_reg_MntR"/>
</dbReference>
<dbReference type="InterPro" id="IPR022689">
    <property type="entry name" value="Iron_dep_repressor"/>
</dbReference>
<dbReference type="InterPro" id="IPR036388">
    <property type="entry name" value="WH-like_DNA-bd_sf"/>
</dbReference>
<dbReference type="InterPro" id="IPR036390">
    <property type="entry name" value="WH_DNA-bd_sf"/>
</dbReference>
<dbReference type="NCBIfam" id="NF003025">
    <property type="entry name" value="PRK03902.1"/>
    <property type="match status" value="1"/>
</dbReference>
<dbReference type="PANTHER" id="PTHR33238">
    <property type="entry name" value="IRON (METAL) DEPENDENT REPRESSOR, DTXR FAMILY"/>
    <property type="match status" value="1"/>
</dbReference>
<dbReference type="PANTHER" id="PTHR33238:SF11">
    <property type="entry name" value="TRANSCRIPTIONAL REGULATOR MNTR"/>
    <property type="match status" value="1"/>
</dbReference>
<dbReference type="Pfam" id="PF02742">
    <property type="entry name" value="Fe_dep_repr_C"/>
    <property type="match status" value="1"/>
</dbReference>
<dbReference type="Pfam" id="PF01325">
    <property type="entry name" value="Fe_dep_repress"/>
    <property type="match status" value="1"/>
</dbReference>
<dbReference type="SMART" id="SM00529">
    <property type="entry name" value="HTH_DTXR"/>
    <property type="match status" value="1"/>
</dbReference>
<dbReference type="SUPFAM" id="SSF47979">
    <property type="entry name" value="Iron-dependent repressor protein, dimerization domain"/>
    <property type="match status" value="1"/>
</dbReference>
<dbReference type="SUPFAM" id="SSF46785">
    <property type="entry name" value="Winged helix' DNA-binding domain"/>
    <property type="match status" value="1"/>
</dbReference>
<dbReference type="PROSITE" id="PS50944">
    <property type="entry name" value="HTH_DTXR"/>
    <property type="match status" value="1"/>
</dbReference>
<comment type="function">
    <text evidence="1">Central regulator of manganese homeostasis.</text>
</comment>
<comment type="activity regulation">
    <text evidence="1">DNA binding is strongly activated by Mn(2+).</text>
</comment>
<comment type="subunit">
    <text evidence="1">Homodimer.</text>
</comment>
<comment type="subcellular location">
    <subcellularLocation>
        <location evidence="1">Cytoplasm</location>
    </subcellularLocation>
</comment>
<comment type="similarity">
    <text evidence="1">Belongs to the DtxR/MntR family.</text>
</comment>
<reference key="1">
    <citation type="journal article" date="2008" name="Chem. Biol. Interact.">
        <title>Extending the Bacillus cereus group genomics to putative food-borne pathogens of different toxicity.</title>
        <authorList>
            <person name="Lapidus A."/>
            <person name="Goltsman E."/>
            <person name="Auger S."/>
            <person name="Galleron N."/>
            <person name="Segurens B."/>
            <person name="Dossat C."/>
            <person name="Land M.L."/>
            <person name="Broussolle V."/>
            <person name="Brillard J."/>
            <person name="Guinebretiere M.-H."/>
            <person name="Sanchis V."/>
            <person name="Nguen-the C."/>
            <person name="Lereclus D."/>
            <person name="Richardson P."/>
            <person name="Wincker P."/>
            <person name="Weissenbach J."/>
            <person name="Ehrlich S.D."/>
            <person name="Sorokin A."/>
        </authorList>
    </citation>
    <scope>NUCLEOTIDE SEQUENCE [LARGE SCALE GENOMIC DNA]</scope>
    <source>
        <strain>KBAB4</strain>
    </source>
</reference>
<name>MNTR_BACMK</name>
<sequence>MPTPSMEDYIEQIYLLIDEKGYARVSDIAEALSVHPSSVTKMVQKLDKDEYLIYEKYRGLVLTSKGKKIGERLVYRHELLEQFMRIIGVDESKIYNDVEGIEHHLSWESIDRIGDLVQYFEQDEVRVKTLRGVQKANEEKSN</sequence>
<feature type="chain" id="PRO_1000132746" description="HTH-type transcriptional regulator MntR">
    <location>
        <begin position="1"/>
        <end position="142"/>
    </location>
</feature>
<feature type="domain" description="HTH dtxR-type" evidence="1">
    <location>
        <begin position="1"/>
        <end position="63"/>
    </location>
</feature>
<feature type="binding site" evidence="1">
    <location>
        <position position="8"/>
    </location>
    <ligand>
        <name>Mn(2+)</name>
        <dbReference type="ChEBI" id="CHEBI:29035"/>
        <label>1</label>
    </ligand>
</feature>
<feature type="binding site" evidence="1">
    <location>
        <position position="11"/>
    </location>
    <ligand>
        <name>Mn(2+)</name>
        <dbReference type="ChEBI" id="CHEBI:29035"/>
        <label>2</label>
    </ligand>
</feature>
<feature type="binding site" evidence="1">
    <location>
        <position position="77"/>
    </location>
    <ligand>
        <name>Mn(2+)</name>
        <dbReference type="ChEBI" id="CHEBI:29035"/>
        <label>2</label>
    </ligand>
</feature>
<feature type="binding site" evidence="1">
    <location>
        <position position="99"/>
    </location>
    <ligand>
        <name>Mn(2+)</name>
        <dbReference type="ChEBI" id="CHEBI:29035"/>
        <label>1</label>
    </ligand>
</feature>
<feature type="binding site" evidence="1">
    <location>
        <position position="99"/>
    </location>
    <ligand>
        <name>Mn(2+)</name>
        <dbReference type="ChEBI" id="CHEBI:29035"/>
        <label>2</label>
    </ligand>
</feature>
<feature type="binding site" evidence="1">
    <location>
        <position position="102"/>
    </location>
    <ligand>
        <name>Mn(2+)</name>
        <dbReference type="ChEBI" id="CHEBI:29035"/>
        <label>1</label>
    </ligand>
</feature>
<feature type="binding site" evidence="1">
    <location>
        <position position="102"/>
    </location>
    <ligand>
        <name>Mn(2+)</name>
        <dbReference type="ChEBI" id="CHEBI:29035"/>
        <label>2</label>
    </ligand>
</feature>
<feature type="binding site" evidence="1">
    <location>
        <position position="103"/>
    </location>
    <ligand>
        <name>Mn(2+)</name>
        <dbReference type="ChEBI" id="CHEBI:29035"/>
        <label>1</label>
    </ligand>
</feature>
<evidence type="ECO:0000255" key="1">
    <source>
        <dbReference type="HAMAP-Rule" id="MF_00732"/>
    </source>
</evidence>
<protein>
    <recommendedName>
        <fullName evidence="1">HTH-type transcriptional regulator MntR</fullName>
    </recommendedName>
    <alternativeName>
        <fullName evidence="1">Manganese transport regulator</fullName>
    </alternativeName>
</protein>